<name>Y55K_BPP22</name>
<keyword id="KW-1043">Host membrane</keyword>
<keyword id="KW-0472">Membrane</keyword>
<keyword id="KW-0812">Transmembrane</keyword>
<keyword id="KW-1133">Transmembrane helix</keyword>
<organismHost>
    <name type="scientific">Salmonella typhimurium</name>
    <dbReference type="NCBI Taxonomy" id="90371"/>
</organismHost>
<accession>P57019</accession>
<sequence length="485" mass="55266">MKFNSNDRIFISIFLGLAIIYTFPLLTHQSFFVDDLGRSLYGGLGWSGNGRPLSDFIFYIINFGTPIIDASPLPLMLGIVILALALSCIREKLFGDDYITASLCFMMILANPFFIENLSYRYDSLTMCMSVAISIISSYVAYQYKPINIIISSILTIAFLSLYQAALNTYAIFLLAFIISDVVKKNSISNITKNTASSVAGLIVGYFAYSYFIAKRLVTGSYNIEHSKIIEINSSLFEGIISNVLSFYRMFSTILNGDNYLIYYSLFFALIISLIVIVLKAIKRDENKKTKLLLVVLILLASMFFIIGPMIFLKSPIYAPRVLIGMGGFMFFCCLCVFYAFEDKQLISRIYFSFILLISTIFSYGAYNAINAQFQLEESIVNRISQDIDYLGFGRDKKNIKFIGTEPYAPINENIVIKHPLMRELIPRIINNDWMWSEVLMQRNVFSRNYRLYDKEVKLENGWKKSGNNVYDIGVVGETIVVRFN</sequence>
<evidence type="ECO:0000255" key="1"/>
<evidence type="ECO:0000305" key="2"/>
<protein>
    <recommendedName>
        <fullName>Uncharacterized 55.3 kDa protein in gtrB 5'region</fullName>
    </recommendedName>
    <alternativeName>
        <fullName>ORF485</fullName>
    </alternativeName>
</protein>
<comment type="subcellular location">
    <subcellularLocation>
        <location evidence="2">Host membrane</location>
        <topology evidence="2">Multi-pass membrane protein</topology>
    </subcellularLocation>
</comment>
<dbReference type="EMBL" id="AF217253">
    <property type="protein sequence ID" value="AAF74999.1"/>
    <property type="molecule type" value="Genomic_DNA"/>
</dbReference>
<dbReference type="Proteomes" id="UP000007960">
    <property type="component" value="Segment"/>
</dbReference>
<dbReference type="GO" id="GO:0033644">
    <property type="term" value="C:host cell membrane"/>
    <property type="evidence" value="ECO:0007669"/>
    <property type="project" value="UniProtKB-SubCell"/>
</dbReference>
<dbReference type="GO" id="GO:0016020">
    <property type="term" value="C:membrane"/>
    <property type="evidence" value="ECO:0007669"/>
    <property type="project" value="UniProtKB-KW"/>
</dbReference>
<dbReference type="InterPro" id="IPR025686">
    <property type="entry name" value="Glucos_trans_II"/>
</dbReference>
<dbReference type="Pfam" id="PF14264">
    <property type="entry name" value="Glucos_trans_II"/>
    <property type="match status" value="1"/>
</dbReference>
<organism>
    <name type="scientific">Salmonella phage P22</name>
    <name type="common">Bacteriophage P22</name>
    <dbReference type="NCBI Taxonomy" id="10754"/>
    <lineage>
        <taxon>Viruses</taxon>
        <taxon>Duplodnaviria</taxon>
        <taxon>Heunggongvirae</taxon>
        <taxon>Uroviricota</taxon>
        <taxon>Caudoviricetes</taxon>
        <taxon>Lederbergvirus</taxon>
    </lineage>
</organism>
<feature type="chain" id="PRO_0000077784" description="Uncharacterized 55.3 kDa protein in gtrB 5'region">
    <location>
        <begin position="1"/>
        <end position="485"/>
    </location>
</feature>
<feature type="transmembrane region" description="Helical" evidence="1">
    <location>
        <begin position="9"/>
        <end position="29"/>
    </location>
</feature>
<feature type="transmembrane region" description="Helical" evidence="1">
    <location>
        <begin position="66"/>
        <end position="86"/>
    </location>
</feature>
<feature type="transmembrane region" description="Helical" evidence="1">
    <location>
        <begin position="98"/>
        <end position="118"/>
    </location>
</feature>
<feature type="transmembrane region" description="Helical" evidence="1">
    <location>
        <begin position="131"/>
        <end position="151"/>
    </location>
</feature>
<feature type="transmembrane region" description="Helical" evidence="1">
    <location>
        <begin position="159"/>
        <end position="179"/>
    </location>
</feature>
<feature type="transmembrane region" description="Helical" evidence="1">
    <location>
        <begin position="194"/>
        <end position="214"/>
    </location>
</feature>
<feature type="transmembrane region" description="Helical" evidence="1">
    <location>
        <begin position="259"/>
        <end position="279"/>
    </location>
</feature>
<feature type="transmembrane region" description="Helical" evidence="1">
    <location>
        <begin position="293"/>
        <end position="313"/>
    </location>
</feature>
<feature type="transmembrane region" description="Helical" evidence="1">
    <location>
        <begin position="322"/>
        <end position="342"/>
    </location>
</feature>
<feature type="transmembrane region" description="Helical" evidence="1">
    <location>
        <begin position="350"/>
        <end position="370"/>
    </location>
</feature>
<reference key="1">
    <citation type="journal article" date="2000" name="J. Bacteriol.">
        <title>Sequence of the genome of Salmonella bacteriophage P22.</title>
        <authorList>
            <person name="Vander Byl C.S."/>
            <person name="Kropinski A.M.B."/>
        </authorList>
    </citation>
    <scope>NUCLEOTIDE SEQUENCE [LARGE SCALE GENOMIC DNA]</scope>
</reference>
<proteinExistence type="predicted"/>